<protein>
    <recommendedName>
        <fullName>Laminin subunit alpha-5</fullName>
    </recommendedName>
    <alternativeName>
        <fullName>Laminin-10 subunit alpha</fullName>
    </alternativeName>
    <alternativeName>
        <fullName>Laminin-11 subunit alpha</fullName>
    </alternativeName>
    <alternativeName>
        <fullName>Laminin-15 subunit alpha</fullName>
    </alternativeName>
</protein>
<name>LAMA5_MOUSE</name>
<reference key="1">
    <citation type="journal article" date="2009" name="PLoS Biol.">
        <title>Lineage-specific biology revealed by a finished genome assembly of the mouse.</title>
        <authorList>
            <person name="Church D.M."/>
            <person name="Goodstadt L."/>
            <person name="Hillier L.W."/>
            <person name="Zody M.C."/>
            <person name="Goldstein S."/>
            <person name="She X."/>
            <person name="Bult C.J."/>
            <person name="Agarwala R."/>
            <person name="Cherry J.L."/>
            <person name="DiCuccio M."/>
            <person name="Hlavina W."/>
            <person name="Kapustin Y."/>
            <person name="Meric P."/>
            <person name="Maglott D."/>
            <person name="Birtle Z."/>
            <person name="Marques A.C."/>
            <person name="Graves T."/>
            <person name="Zhou S."/>
            <person name="Teague B."/>
            <person name="Potamousis K."/>
            <person name="Churas C."/>
            <person name="Place M."/>
            <person name="Herschleb J."/>
            <person name="Runnheim R."/>
            <person name="Forrest D."/>
            <person name="Amos-Landgraf J."/>
            <person name="Schwartz D.C."/>
            <person name="Cheng Z."/>
            <person name="Lindblad-Toh K."/>
            <person name="Eichler E.E."/>
            <person name="Ponting C.P."/>
        </authorList>
    </citation>
    <scope>NUCLEOTIDE SEQUENCE [LARGE SCALE GENOMIC DNA]</scope>
    <source>
        <strain>C57BL/6J</strain>
    </source>
</reference>
<reference key="2">
    <citation type="journal article" date="2002" name="Biochem. J.">
        <title>Complete sequence, recombinant analysis and binding to laminins and sulphated ligands of the N-terminal domains of laminin alpha3B and alpha5 chains.</title>
        <authorList>
            <person name="Garbe J.H."/>
            <person name="Gohring W."/>
            <person name="Mann K."/>
            <person name="Timpl R."/>
            <person name="Sasaki T."/>
        </authorList>
    </citation>
    <scope>NUCLEOTIDE SEQUENCE [MRNA] OF 1-92</scope>
    <scope>PROTEIN SEQUENCE OF 41-46</scope>
</reference>
<reference key="3">
    <citation type="journal article" date="1995" name="J. Biol. Chem.">
        <title>Molecular cloning of a novel laminin chain, alpha 5, and widespread expression in adult mouse tissues.</title>
        <authorList>
            <person name="Miner J.H."/>
            <person name="Lewis R.M."/>
            <person name="Sanes J.R."/>
        </authorList>
    </citation>
    <scope>NUCLEOTIDE SEQUENCE [MRNA] OF 84-3718</scope>
    <scope>TISSUE SPECIFICITY</scope>
    <source>
        <strain>C57BL/6 X CBA</strain>
        <tissue>Lung</tissue>
    </source>
</reference>
<reference key="4">
    <citation type="submission" date="1997-11" db="EMBL/GenBank/DDBJ databases">
        <authorList>
            <person name="Miner J.H."/>
            <person name="Lewis R.M."/>
            <person name="Sanes J.R."/>
        </authorList>
    </citation>
    <scope>SEQUENCE REVISION</scope>
</reference>
<reference key="5">
    <citation type="journal article" date="2009" name="Nat. Biotechnol.">
        <title>Mass-spectrometric identification and relative quantification of N-linked cell surface glycoproteins.</title>
        <authorList>
            <person name="Wollscheid B."/>
            <person name="Bausch-Fluck D."/>
            <person name="Henderson C."/>
            <person name="O'Brien R."/>
            <person name="Bibel M."/>
            <person name="Schiess R."/>
            <person name="Aebersold R."/>
            <person name="Watts J.D."/>
        </authorList>
    </citation>
    <scope>GLYCOSYLATION [LARGE SCALE ANALYSIS] AT ASN-248; ASN-926; ASN-2198; ASN-2211; ASN-2395; ASN-2425 AND ASN-3623</scope>
</reference>
<reference key="6">
    <citation type="journal article" date="2010" name="Cell">
        <title>A tissue-specific atlas of mouse protein phosphorylation and expression.</title>
        <authorList>
            <person name="Huttlin E.L."/>
            <person name="Jedrychowski M.P."/>
            <person name="Elias J.E."/>
            <person name="Goswami T."/>
            <person name="Rad R."/>
            <person name="Beausoleil S.A."/>
            <person name="Villen J."/>
            <person name="Haas W."/>
            <person name="Sowa M.E."/>
            <person name="Gygi S.P."/>
        </authorList>
    </citation>
    <scope>IDENTIFICATION BY MASS SPECTROMETRY [LARGE SCALE ANALYSIS]</scope>
    <source>
        <tissue>Brown adipose tissue</tissue>
        <tissue>Heart</tissue>
        <tissue>Kidney</tissue>
        <tissue>Lung</tissue>
    </source>
</reference>
<reference key="7">
    <citation type="journal article" date="2017" name="Circ. Res.">
        <title>Polydom Is an Extracellular Matrix Protein Involved in Lymphatic Vessel Remodeling.</title>
        <authorList>
            <person name="Morooka N."/>
            <person name="Futaki S."/>
            <person name="Sato-Nishiuchi R."/>
            <person name="Nishino M."/>
            <person name="Totani Y."/>
            <person name="Shimono C."/>
            <person name="Nakano I."/>
            <person name="Nakajima H."/>
            <person name="Mochizuki N."/>
            <person name="Sekiguchi K."/>
        </authorList>
    </citation>
    <scope>DEVELOPMENTAL STAGE</scope>
</reference>
<sequence>MAKRGGQLCAGSAPGALGPRSPAPRPLLLLLAGLALVGEARTPGGDGFSLHPPYFNLAEGARITASATCGEEAPTRSVSRPTEDLYCKLVGGPVAGGDPNQTIQGQYCDICTAANSNKAHPVSNAIDGTERWWQSPPLSRGLEYNEVNVTLDLGQVFHVAYVLIKFANSPRPDLWVLERSTDFGHTYQPWQFFASSKRDCLERFGPRTLERITQDDDVICTTEYSRIVPLENGEIVVSLVNGRPGALNFSYSPLLRDFTKATNIRLRFLRTNTLLGHLMGKALRDPTVTRRYYYSIKDISIGGRCVCHGHADVCDAKDPLDPFRLQCACQHNTCGGSCDRCCPGFNQQPWKPATTDSANECQSCNCHGHAYDCYYDPEVDRRNASQNQDNVYQGGGVCLDCQHHTTGINCERCLPGFFRAPDQPLDSPHVCRPCDCESDFTDGTCEDLTGRCYCRPNFTGELCAACAEGYTDFPHCYPLPSFPHNDTREQVLPAGQIVNCDCNAAGTQGNACRKDPRLGRCVCKPNFRGAHCELCAPGFHGPSCHPCQCSSPGVANSLCDPESGQCMCRTGFEGDRCDHCALGYFHFPLCQLCGCSPAGTLPEGCDEAGRCQCRPGFDGPHCDRCLPGYHGYPDCHACACDPRGALDQQCGVGGLCHCRPGYTGATCQECSPGFYGFPSCIPCHCSADGSLHTTCDPTTGQCRCRPRVTGLHCDMCVPGAYNFPYCEAGSCHPAGLAPANPALPETQAPCMCRAHVEGPSCDRCKPGYWGLSASNPEGCTRCSCDPRGTLGGVTECQGNGQCFCKAHVCGKTCAACKDGFFGLDYADYFGCRSCRCDVGGALGQGCEPKTGACRCRPNTQGPTCSEPAKDHYLPDLHHMRLELEEAATPEGHAVRFGFNPLEFENFSWRGYAHMMAIQPRIVARLNVTSPDLFRLVFRYVNRGSTSVNGQISVREEGKLSSCTNCTEQSQPVAFPPSTEPAFVTVPQRGFGEPFVLNPGIWALLVEAEGVLLDYVVLLPSTYYEAALLQHRVTEACTYRPSALHSTENCLVYAHLPLDGFPSAAGTEALCRHDNSLPRPCPTEQLSPSHPPLATCFGSDVDIQLEMAVPQPGQYVLVVEYVGEDSHQEMGVAVHTPQRAPQQGVLNLHPCPYSSLCRSPARDTQHHLAIFYLDSEASIRLTAEQAHFFLHSVTLVPVEEFSTEFVEPRVFCVSSHGTFNPSSAACLASRFPKPPQPIILKDCQVLPLPPDLPLTQSQELSPGAPPEGPQPRPPTAVDPNAEPTLLRHPQGTVVFTTQVPTLGRYAFLLHGYQPVHPSFPVEVLINGGRIWQGHANASFCPHGYGCRTLVLCEGQTMLDVTDNELTVTVRVPEGRWLWLDYVLIVPEDAYSSSYLQEEPLDKSYDFISHCATQGYHISPSSSSPFCRNAATSLSLFYNNGALPCGCHEVGAVSPTCEPFGGQCPCRGHVIGRDCSRCATGYWGFPNCRPCDCGARLCDELTGQCICPPRTVPPDCLVCQPQSFGCHPLVGCEECNCSGPGVQELTDPTCDMDSGQCRCRPNVAGRRCDTCAPGFYGYPSCRPCDCHEAGTMASVCDPLTGQCHCKENVQGSRCDQCRVGTFSLDAANPKGCTRCFCFGATERCGNSNLARHEFVDMEGWVLLSSDRQVVPHEHRPEIELLHADLRSVADTFSELYWQAPPSYLGDRVSSYGGTLHYELHSETQRGDIFIPYESRPDVVLQGNQMSIAFLELAYPPPGQVHRGQLQLVEGNFRHLETHNPVSREELMMVLAGLEQLQIRALFSQTSSSVSLRRVVLEVASEAGRGPPASNVELCMCPANYRGDSCQECAPGYYRDTKGLFLGRCVPCQCHGHSDRCLPGSGICVGCQHNTEGDQCERCRPGFVSSDPSNPASPCVSCPCPLAVPSNNFADGCVLRNGRTQCLCRPGYAGASCERCAPGFFGNPLVLGSSCQPCDCSGNGDPNMIFSDCDPLTGACRGCLRHTTGPHCERCAPGFYGNALLPGNCTRCDCSPCGTETCDPQSGRCLCKAGVTGQRCDRCLEGYFGFEQCQGCRPCACGPAAKGSECHPQSGQCHCQPGTTGPQCLECAPGYWGLPEKGCRRCQCPRGHCDPHTGHCTCPPGLSGERCDTCSQQHQVPVPGKPGGHGIHCEVCDHCVVLLLDDLERAGALLPAIREQLQGINASSAAWARLHRLNASIADLQSKLRSPPGPRYQAAQQLQTLEQQSISLQQDTERLGSQATGVQGQAGQLLDTTESTLGRAQKLLESVRAVGRALNELASRMGQGSPGDALVPSGEQLRWALAEVERLLWDMRTRDLGAQGAVAEAELAEAQRLMARVQEQLTSFWEENQSLATHIRDQLAQYESGLMDLREALNQAVNTTREAEELNSRNQERLKEALQWKQELSQDNATLKATLQAASLILGHVSELLQGIDQAKEDLEHLAASLDGAWTPLLKRMQAFSPASSKVDLVEAAEAHAQKLNQLAINLSGIILGINQDRFIQRAVEASNAYSSILQAVQAAEDAAGQALRQASRTWEMVVQRGLAAGARQLLANSSALEETILGHQGRLGLAQGRLQAAGIQLHNVWARKNQLAAQIQEAQAMLAMDTSETSEKIAHAKAVAAEALSTATHVQSQLQGMQKNVERWQSQLGGLQGQDLSQVERDASSSVSTLEKTLPQLLAKLSRLENRGVHNASLALSANIGRVRKLIAQARSAASKVKVSMKFNGRSGVRLRTPRDLADLAAYTALKFHIQSPVPAPEPGKNTGDHFVLYMGSRQATGDYMGVSLRNQKVHWVYRLGKAGPTTLSIDENIGEQFAAVSIDRTLQFGHMSVTVEKQMVHEIKGDTVAPGSEGLLNLHPDDFVFYVGGYPSNFTPPEPLRFPGYLGCIEMETLNEEVVSLYNFEQTFMLDTAVDKPCARSKATGDPWLTDGSYLDGSGFARISFEKQFSNTKRFDQELRLVSYNGIIFFLKQESQFLCLAVQEGTLVLFYDFGSGLKKADPLQPPQALTAASKAIQVFLLAGNRKRVLVRVERATVFSVDQDNMLEMADAYYLGGVPPEQLPLSLRQLFPSGGSVRGCIKGIKALGKYVDLKRLNTTGISFGCTADLLVGRTMTFHGHGFLPLALPDVAPITEVVYSGFGFRGTQDNNLLYYRTSPDGPYQVSLREGHVTLRFMNQEVETQRVFADGAPHYVAFYSNVTGVWLYVDDQLQLVKSHERTTPMLQLQPEEPSRLLLGGLPVSGTFHNFSGCISNVFVQRLRGPQRVFDLHQNMGSVNVSVGCTPAQLIETSRATAQKVSRRSRQPSQDLACTTPWLPGTIQDAYQFGGPLPSYLQFVGISPSHRNRLHLSMLVRPHAASQGLLLSTAPMSGRSPSLVLFLNHGHFVAQTEGPGPRLQVQSRQHSRAGQWHRVSVRWGMQQIQLVVDGSQTWSQKALHHRVPRAERPQPYTLSVGGLPASSYSSKLPVSVGFSGCLKKLQLDKRPLRTPTQMVGVTPCVSGPLEDGLFFPGSEGVVTLELPKAKMPYVSLELEMRPLAAAGLIFHLGQALATPYMQLKVLTEQVLLQANDGAGEFSTWVTYPKLCDGRWHRVAVIMGRDTLRLEVDTQSNHTTGRLPESLAGSPALLHLGSLPKSSTARPELPAYRGCLRKLLINGAPVNVTASVQIQGAVGMRGCPSGTLALSKQGKALTQRQAKPSVSPLLWH</sequence>
<gene>
    <name type="primary">Lama5</name>
</gene>
<organism>
    <name type="scientific">Mus musculus</name>
    <name type="common">Mouse</name>
    <dbReference type="NCBI Taxonomy" id="10090"/>
    <lineage>
        <taxon>Eukaryota</taxon>
        <taxon>Metazoa</taxon>
        <taxon>Chordata</taxon>
        <taxon>Craniata</taxon>
        <taxon>Vertebrata</taxon>
        <taxon>Euteleostomi</taxon>
        <taxon>Mammalia</taxon>
        <taxon>Eutheria</taxon>
        <taxon>Euarchontoglires</taxon>
        <taxon>Glires</taxon>
        <taxon>Rodentia</taxon>
        <taxon>Myomorpha</taxon>
        <taxon>Muroidea</taxon>
        <taxon>Muridae</taxon>
        <taxon>Murinae</taxon>
        <taxon>Mus</taxon>
        <taxon>Mus</taxon>
    </lineage>
</organism>
<keyword id="KW-0002">3D-structure</keyword>
<keyword id="KW-0084">Basement membrane</keyword>
<keyword id="KW-0130">Cell adhesion</keyword>
<keyword id="KW-0175">Coiled coil</keyword>
<keyword id="KW-0903">Direct protein sequencing</keyword>
<keyword id="KW-1015">Disulfide bond</keyword>
<keyword id="KW-0272">Extracellular matrix</keyword>
<keyword id="KW-0325">Glycoprotein</keyword>
<keyword id="KW-0424">Laminin EGF-like domain</keyword>
<keyword id="KW-1185">Reference proteome</keyword>
<keyword id="KW-0677">Repeat</keyword>
<keyword id="KW-0964">Secreted</keyword>
<keyword id="KW-0732">Signal</keyword>
<comment type="function">
    <text evidence="2">Binding to cells via a high affinity receptor, laminin is thought to mediate the attachment, migration and organization of cells into tissues during embryonic development by interacting with other extracellular matrix components. Alpha-5 may be the major laminin alpha chain of adult epithelial and/or endothelial basal laminae. Plays a role in the regulation of skeletogenesis, through a mechanism that involves integrin-mediated signaling and PTK2B/PYK2 (By similarity).</text>
</comment>
<comment type="subunit">
    <text>Laminin is a complex glycoprotein, consisting of three different polypeptide chains (alpha, beta, gamma), which are bound to each other by disulfide bonds into a cross-shaped molecule comprising one long and three short arms with globules at each end. Alpha-5 is a subunit of laminin-10 (laminin-511), laminin-11 (laminin-521) and laminin-15 (laminin-523).</text>
</comment>
<comment type="subcellular location">
    <subcellularLocation>
        <location>Secreted</location>
        <location>Extracellular space</location>
        <location>Extracellular matrix</location>
        <location>Basement membrane</location>
    </subcellularLocation>
    <text>Major component.</text>
</comment>
<comment type="tissue specificity">
    <text evidence="12">In adult, high levels in heart, lung, and kidney; lower in brain, muscle and testis; very low in liver, gut and skin.</text>
</comment>
<comment type="developmental stage">
    <text evidence="11">Expressed in the mesentery lymphatic vessel valves at 15.5 and 18.5 dpc (at protein level).</text>
</comment>
<comment type="domain">
    <text>The alpha-helical domains I and II are thought to interact with other laminin chains to form a coiled coil structure.</text>
</comment>
<comment type="domain">
    <text>Domains VI, IV and G are globular.</text>
</comment>
<feature type="signal peptide" evidence="9">
    <location>
        <begin position="1"/>
        <end position="40"/>
    </location>
</feature>
<feature type="chain" id="PRO_0000017063" description="Laminin subunit alpha-5">
    <location>
        <begin position="41"/>
        <end position="3718"/>
    </location>
</feature>
<feature type="domain" description="Laminin N-terminal" evidence="7">
    <location>
        <begin position="46"/>
        <end position="304"/>
    </location>
</feature>
<feature type="domain" description="Laminin EGF-like 1" evidence="6">
    <location>
        <begin position="305"/>
        <end position="363"/>
    </location>
</feature>
<feature type="domain" description="Laminin EGF-like 2" evidence="6">
    <location>
        <begin position="364"/>
        <end position="433"/>
    </location>
</feature>
<feature type="domain" description="Laminin EGF-like 3" evidence="6">
    <location>
        <begin position="434"/>
        <end position="479"/>
    </location>
</feature>
<feature type="domain" description="Laminin EGF-like 4" evidence="6">
    <location>
        <begin position="500"/>
        <end position="546"/>
    </location>
</feature>
<feature type="domain" description="Laminin EGF-like 5" evidence="6">
    <location>
        <begin position="547"/>
        <end position="592"/>
    </location>
</feature>
<feature type="domain" description="Laminin EGF-like 6" evidence="6">
    <location>
        <begin position="593"/>
        <end position="637"/>
    </location>
</feature>
<feature type="domain" description="Laminin EGF-like 7" evidence="6">
    <location>
        <begin position="638"/>
        <end position="682"/>
    </location>
</feature>
<feature type="domain" description="Laminin EGF-like 8" evidence="6">
    <location>
        <begin position="683"/>
        <end position="728"/>
    </location>
</feature>
<feature type="domain" description="Laminin EGF-like 9" evidence="6">
    <location>
        <begin position="729"/>
        <end position="781"/>
    </location>
</feature>
<feature type="domain" description="Laminin EGF-like 10" evidence="6">
    <location>
        <begin position="782"/>
        <end position="833"/>
    </location>
</feature>
<feature type="domain" description="Laminin EGF-like 11; truncated" evidence="6">
    <location>
        <begin position="834"/>
        <end position="855"/>
    </location>
</feature>
<feature type="domain" description="Laminin EGF-like 12" evidence="6">
    <location>
        <begin position="1443"/>
        <end position="1488"/>
    </location>
</feature>
<feature type="domain" description="Laminin EGF-like 13" evidence="6">
    <location>
        <begin position="1489"/>
        <end position="1532"/>
    </location>
</feature>
<feature type="domain" description="Laminin EGF-like 14" evidence="6">
    <location>
        <begin position="1533"/>
        <end position="1581"/>
    </location>
</feature>
<feature type="domain" description="Laminin EGF-like 15" evidence="6">
    <location>
        <begin position="1582"/>
        <end position="1632"/>
    </location>
</feature>
<feature type="domain" description="Laminin EGF-like 16; first part" evidence="6">
    <location>
        <begin position="1633"/>
        <end position="1642"/>
    </location>
</feature>
<feature type="domain" description="Laminin IV type A" evidence="5">
    <location>
        <begin position="1646"/>
        <end position="1831"/>
    </location>
</feature>
<feature type="domain" description="Laminin EGF-like 16; second part" evidence="6">
    <location>
        <begin position="1832"/>
        <end position="1864"/>
    </location>
</feature>
<feature type="domain" description="Laminin EGF-like 17" evidence="6">
    <location>
        <begin position="1865"/>
        <end position="1914"/>
    </location>
</feature>
<feature type="domain" description="Laminin EGF-like 18" evidence="6">
    <location>
        <begin position="1915"/>
        <end position="1970"/>
    </location>
</feature>
<feature type="domain" description="Laminin EGF-like 19" evidence="6">
    <location>
        <begin position="1971"/>
        <end position="2024"/>
    </location>
</feature>
<feature type="domain" description="Laminin EGF-like 20" evidence="6">
    <location>
        <begin position="2025"/>
        <end position="2071"/>
    </location>
</feature>
<feature type="domain" description="Laminin EGF-like 21" evidence="6">
    <location>
        <begin position="2072"/>
        <end position="2118"/>
    </location>
</feature>
<feature type="domain" description="Laminin EGF-like 22" evidence="6">
    <location>
        <begin position="2119"/>
        <end position="2168"/>
    </location>
</feature>
<feature type="domain" description="Laminin G-like 1" evidence="4">
    <location>
        <begin position="2736"/>
        <end position="2933"/>
    </location>
</feature>
<feature type="domain" description="Laminin G-like 2" evidence="4">
    <location>
        <begin position="2947"/>
        <end position="3119"/>
    </location>
</feature>
<feature type="domain" description="Laminin G-like 3" evidence="4">
    <location>
        <begin position="3128"/>
        <end position="3296"/>
    </location>
</feature>
<feature type="domain" description="Laminin G-like 4" evidence="4">
    <location>
        <begin position="3337"/>
        <end position="3511"/>
    </location>
</feature>
<feature type="domain" description="Laminin G-like 5" evidence="4">
    <location>
        <begin position="3518"/>
        <end position="3689"/>
    </location>
</feature>
<feature type="region of interest" description="Domain IV 1 (domain IV B)">
    <location>
        <begin position="856"/>
        <end position="1442"/>
    </location>
</feature>
<feature type="region of interest" description="Disordered" evidence="8">
    <location>
        <begin position="1253"/>
        <end position="1284"/>
    </location>
</feature>
<feature type="region of interest" description="Domain II and I">
    <location>
        <begin position="2169"/>
        <end position="2735"/>
    </location>
</feature>
<feature type="coiled-coil region" evidence="3">
    <location>
        <begin position="2205"/>
        <end position="2257"/>
    </location>
</feature>
<feature type="coiled-coil region" evidence="3">
    <location>
        <begin position="2330"/>
        <end position="2464"/>
    </location>
</feature>
<feature type="coiled-coil region" evidence="3">
    <location>
        <begin position="2604"/>
        <end position="2621"/>
    </location>
</feature>
<feature type="coiled-coil region" evidence="3">
    <location>
        <begin position="2639"/>
        <end position="2705"/>
    </location>
</feature>
<feature type="short sequence motif" description="Cell attachment site" evidence="3">
    <location>
        <begin position="1723"/>
        <end position="1725"/>
    </location>
</feature>
<feature type="short sequence motif" description="Cell attachment site" evidence="3">
    <location>
        <begin position="1839"/>
        <end position="1841"/>
    </location>
</feature>
<feature type="compositionally biased region" description="Pro residues" evidence="8">
    <location>
        <begin position="1262"/>
        <end position="1275"/>
    </location>
</feature>
<feature type="glycosylation site" description="N-linked (GlcNAc...) asparagine" evidence="3">
    <location>
        <position position="100"/>
    </location>
</feature>
<feature type="glycosylation site" description="N-linked (GlcNAc...) asparagine" evidence="3">
    <location>
        <position position="148"/>
    </location>
</feature>
<feature type="glycosylation site" description="N-linked (GlcNAc...) asparagine" evidence="10">
    <location>
        <position position="248"/>
    </location>
</feature>
<feature type="glycosylation site" description="N-linked (GlcNAc...) asparagine" evidence="3">
    <location>
        <position position="383"/>
    </location>
</feature>
<feature type="glycosylation site" description="N-linked (GlcNAc...) asparagine" evidence="3">
    <location>
        <position position="457"/>
    </location>
</feature>
<feature type="glycosylation site" description="N-linked (GlcNAc...) asparagine" evidence="3">
    <location>
        <position position="485"/>
    </location>
</feature>
<feature type="glycosylation site" description="N-linked (GlcNAc...) asparagine" evidence="3">
    <location>
        <position position="905"/>
    </location>
</feature>
<feature type="glycosylation site" description="N-linked (GlcNAc...) asparagine" evidence="10">
    <location>
        <position position="926"/>
    </location>
</feature>
<feature type="glycosylation site" description="N-linked (GlcNAc...) asparagine" evidence="3">
    <location>
        <position position="964"/>
    </location>
</feature>
<feature type="glycosylation site" description="N-linked (GlcNAc...) asparagine" evidence="3">
    <location>
        <position position="1335"/>
    </location>
</feature>
<feature type="glycosylation site" description="N-linked (GlcNAc...) asparagine" evidence="3">
    <location>
        <position position="1534"/>
    </location>
</feature>
<feature type="glycosylation site" description="N-linked (GlcNAc...) asparagine" evidence="3">
    <location>
        <position position="2021"/>
    </location>
</feature>
<feature type="glycosylation site" description="N-linked (GlcNAc...) asparagine" evidence="10">
    <location>
        <position position="2198"/>
    </location>
</feature>
<feature type="glycosylation site" description="N-linked (GlcNAc...) asparagine" evidence="10">
    <location>
        <position position="2211"/>
    </location>
</feature>
<feature type="glycosylation site" description="N-linked (GlcNAc...) asparagine" evidence="3">
    <location>
        <position position="2365"/>
    </location>
</feature>
<feature type="glycosylation site" description="N-linked (GlcNAc...) asparagine" evidence="10">
    <location>
        <position position="2395"/>
    </location>
</feature>
<feature type="glycosylation site" description="N-linked (GlcNAc...) asparagine" evidence="10">
    <location>
        <position position="2425"/>
    </location>
</feature>
<feature type="glycosylation site" description="N-linked (GlcNAc...) asparagine" evidence="3">
    <location>
        <position position="2503"/>
    </location>
</feature>
<feature type="glycosylation site" description="N-linked (GlcNAc...) asparagine" evidence="3">
    <location>
        <position position="2570"/>
    </location>
</feature>
<feature type="glycosylation site" description="N-linked (GlcNAc...) asparagine" evidence="3">
    <location>
        <position position="2709"/>
    </location>
</feature>
<feature type="glycosylation site" description="N-linked (GlcNAc...) asparagine" evidence="3">
    <location>
        <position position="3111"/>
    </location>
</feature>
<feature type="glycosylation site" description="N-linked (GlcNAc...) asparagine" evidence="3">
    <location>
        <position position="3213"/>
    </location>
</feature>
<feature type="glycosylation site" description="N-linked (GlcNAc...) asparagine" evidence="3">
    <location>
        <position position="3261"/>
    </location>
</feature>
<feature type="glycosylation site" description="N-linked (GlcNAc...) asparagine" evidence="3">
    <location>
        <position position="3291"/>
    </location>
</feature>
<feature type="glycosylation site" description="N-linked (GlcNAc...) asparagine" evidence="10">
    <location>
        <position position="3623"/>
    </location>
</feature>
<feature type="glycosylation site" description="N-linked (GlcNAc...) asparagine" evidence="3">
    <location>
        <position position="3673"/>
    </location>
</feature>
<feature type="disulfide bond" evidence="1">
    <location>
        <begin position="305"/>
        <end position="314"/>
    </location>
</feature>
<feature type="disulfide bond" evidence="1">
    <location>
        <begin position="307"/>
        <end position="327"/>
    </location>
</feature>
<feature type="disulfide bond" evidence="1">
    <location>
        <begin position="329"/>
        <end position="338"/>
    </location>
</feature>
<feature type="disulfide bond" evidence="1">
    <location>
        <begin position="341"/>
        <end position="361"/>
    </location>
</feature>
<feature type="disulfide bond" evidence="1">
    <location>
        <begin position="364"/>
        <end position="373"/>
    </location>
</feature>
<feature type="disulfide bond" evidence="1">
    <location>
        <begin position="366"/>
        <end position="398"/>
    </location>
</feature>
<feature type="disulfide bond" evidence="1">
    <location>
        <begin position="401"/>
        <end position="410"/>
    </location>
</feature>
<feature type="disulfide bond" evidence="1">
    <location>
        <begin position="413"/>
        <end position="431"/>
    </location>
</feature>
<feature type="disulfide bond" evidence="1">
    <location>
        <begin position="434"/>
        <end position="445"/>
    </location>
</feature>
<feature type="disulfide bond" evidence="1">
    <location>
        <begin position="436"/>
        <end position="452"/>
    </location>
</feature>
<feature type="disulfide bond" evidence="1">
    <location>
        <begin position="454"/>
        <end position="463"/>
    </location>
</feature>
<feature type="disulfide bond" evidence="1">
    <location>
        <begin position="466"/>
        <end position="476"/>
    </location>
</feature>
<feature type="disulfide bond" evidence="1">
    <location>
        <begin position="500"/>
        <end position="512"/>
    </location>
</feature>
<feature type="disulfide bond" evidence="1">
    <location>
        <begin position="502"/>
        <end position="521"/>
    </location>
</feature>
<feature type="disulfide bond" evidence="1">
    <location>
        <begin position="523"/>
        <end position="532"/>
    </location>
</feature>
<feature type="disulfide bond" evidence="1">
    <location>
        <begin position="535"/>
        <end position="544"/>
    </location>
</feature>
<feature type="disulfide bond" evidence="1">
    <location>
        <begin position="547"/>
        <end position="559"/>
    </location>
</feature>
<feature type="disulfide bond" evidence="1">
    <location>
        <begin position="549"/>
        <end position="566"/>
    </location>
</feature>
<feature type="disulfide bond" evidence="1">
    <location>
        <begin position="568"/>
        <end position="577"/>
    </location>
</feature>
<feature type="disulfide bond" evidence="1">
    <location>
        <begin position="580"/>
        <end position="590"/>
    </location>
</feature>
<feature type="disulfide bond" evidence="1">
    <location>
        <begin position="593"/>
        <end position="605"/>
    </location>
</feature>
<feature type="disulfide bond" evidence="1">
    <location>
        <begin position="595"/>
        <end position="611"/>
    </location>
</feature>
<feature type="disulfide bond" evidence="1">
    <location>
        <begin position="613"/>
        <end position="622"/>
    </location>
</feature>
<feature type="disulfide bond" evidence="1">
    <location>
        <begin position="625"/>
        <end position="635"/>
    </location>
</feature>
<feature type="disulfide bond" evidence="1">
    <location>
        <begin position="638"/>
        <end position="650"/>
    </location>
</feature>
<feature type="disulfide bond" evidence="1">
    <location>
        <begin position="640"/>
        <end position="656"/>
    </location>
</feature>
<feature type="disulfide bond" evidence="1">
    <location>
        <begin position="658"/>
        <end position="667"/>
    </location>
</feature>
<feature type="disulfide bond" evidence="1">
    <location>
        <begin position="670"/>
        <end position="680"/>
    </location>
</feature>
<feature type="disulfide bond" evidence="1">
    <location>
        <begin position="683"/>
        <end position="695"/>
    </location>
</feature>
<feature type="disulfide bond" evidence="1">
    <location>
        <begin position="685"/>
        <end position="702"/>
    </location>
</feature>
<feature type="disulfide bond" evidence="1">
    <location>
        <begin position="704"/>
        <end position="713"/>
    </location>
</feature>
<feature type="disulfide bond" evidence="1">
    <location>
        <begin position="716"/>
        <end position="731"/>
    </location>
</feature>
<feature type="disulfide bond" evidence="1">
    <location>
        <begin position="752"/>
        <end position="761"/>
    </location>
</feature>
<feature type="disulfide bond" evidence="1">
    <location>
        <begin position="764"/>
        <end position="779"/>
    </location>
</feature>
<feature type="disulfide bond" evidence="1">
    <location>
        <begin position="782"/>
        <end position="796"/>
    </location>
</feature>
<feature type="disulfide bond" evidence="1">
    <location>
        <begin position="784"/>
        <end position="802"/>
    </location>
</feature>
<feature type="disulfide bond" evidence="1">
    <location>
        <begin position="804"/>
        <end position="813"/>
    </location>
</feature>
<feature type="disulfide bond" evidence="1">
    <location>
        <begin position="816"/>
        <end position="831"/>
    </location>
</feature>
<feature type="disulfide bond" evidence="1">
    <location>
        <begin position="834"/>
        <end position="846"/>
    </location>
</feature>
<feature type="disulfide bond" evidence="1">
    <location>
        <begin position="836"/>
        <end position="853"/>
    </location>
</feature>
<feature type="disulfide bond" evidence="1">
    <location>
        <begin position="855"/>
        <end position="864"/>
    </location>
</feature>
<feature type="disulfide bond" evidence="1">
    <location>
        <begin position="1443"/>
        <end position="1455"/>
    </location>
</feature>
<feature type="disulfide bond" evidence="1">
    <location>
        <begin position="1445"/>
        <end position="1462"/>
    </location>
</feature>
<feature type="disulfide bond" evidence="1">
    <location>
        <begin position="1464"/>
        <end position="1473"/>
    </location>
</feature>
<feature type="disulfide bond" evidence="1">
    <location>
        <begin position="1476"/>
        <end position="1486"/>
    </location>
</feature>
<feature type="disulfide bond" evidence="1">
    <location>
        <begin position="1489"/>
        <end position="1496"/>
    </location>
</feature>
<feature type="disulfide bond" evidence="1">
    <location>
        <begin position="1491"/>
        <end position="1503"/>
    </location>
</feature>
<feature type="disulfide bond" evidence="1">
    <location>
        <begin position="1505"/>
        <end position="1514"/>
    </location>
</feature>
<feature type="disulfide bond" evidence="1">
    <location>
        <begin position="1517"/>
        <end position="1530"/>
    </location>
</feature>
<feature type="disulfide bond" evidence="1">
    <location>
        <begin position="1533"/>
        <end position="1548"/>
    </location>
</feature>
<feature type="disulfide bond" evidence="1">
    <location>
        <begin position="1535"/>
        <end position="1555"/>
    </location>
</feature>
<feature type="disulfide bond" evidence="1">
    <location>
        <begin position="1557"/>
        <end position="1566"/>
    </location>
</feature>
<feature type="disulfide bond" evidence="1">
    <location>
        <begin position="1569"/>
        <end position="1579"/>
    </location>
</feature>
<feature type="disulfide bond" evidence="1">
    <location>
        <begin position="1582"/>
        <end position="1594"/>
    </location>
</feature>
<feature type="disulfide bond" evidence="1">
    <location>
        <begin position="1584"/>
        <end position="1601"/>
    </location>
</feature>
<feature type="disulfide bond" evidence="1">
    <location>
        <begin position="1603"/>
        <end position="1612"/>
    </location>
</feature>
<feature type="disulfide bond" evidence="1">
    <location>
        <begin position="1615"/>
        <end position="1630"/>
    </location>
</feature>
<feature type="disulfide bond" evidence="1">
    <location>
        <begin position="1865"/>
        <end position="1874"/>
    </location>
</feature>
<feature type="disulfide bond" evidence="1">
    <location>
        <begin position="1867"/>
        <end position="1881"/>
    </location>
</feature>
<feature type="disulfide bond" evidence="1">
    <location>
        <begin position="1884"/>
        <end position="1893"/>
    </location>
</feature>
<feature type="disulfide bond" evidence="1">
    <location>
        <begin position="1896"/>
        <end position="1912"/>
    </location>
</feature>
<feature type="disulfide bond" evidence="1">
    <location>
        <begin position="1915"/>
        <end position="1930"/>
    </location>
</feature>
<feature type="disulfide bond" evidence="1">
    <location>
        <begin position="1917"/>
        <end position="1939"/>
    </location>
</feature>
<feature type="disulfide bond" evidence="1">
    <location>
        <begin position="1941"/>
        <end position="1950"/>
    </location>
</feature>
<feature type="disulfide bond" evidence="1">
    <location>
        <begin position="1953"/>
        <end position="1968"/>
    </location>
</feature>
<feature type="disulfide bond" evidence="1">
    <location>
        <begin position="1971"/>
        <end position="1986"/>
    </location>
</feature>
<feature type="disulfide bond" evidence="1">
    <location>
        <begin position="1973"/>
        <end position="1993"/>
    </location>
</feature>
<feature type="disulfide bond" evidence="1">
    <location>
        <begin position="1996"/>
        <end position="2005"/>
    </location>
</feature>
<feature type="disulfide bond" evidence="1">
    <location>
        <begin position="2008"/>
        <end position="2022"/>
    </location>
</feature>
<feature type="disulfide bond" evidence="1">
    <location>
        <begin position="2025"/>
        <end position="2035"/>
    </location>
</feature>
<feature type="disulfide bond" evidence="1">
    <location>
        <begin position="2027"/>
        <end position="2042"/>
    </location>
</feature>
<feature type="disulfide bond" evidence="1">
    <location>
        <begin position="2044"/>
        <end position="2053"/>
    </location>
</feature>
<feature type="disulfide bond" evidence="1">
    <location>
        <begin position="2056"/>
        <end position="2069"/>
    </location>
</feature>
<feature type="disulfide bond" evidence="1">
    <location>
        <begin position="2072"/>
        <end position="2083"/>
    </location>
</feature>
<feature type="disulfide bond" evidence="1">
    <location>
        <begin position="2074"/>
        <end position="2090"/>
    </location>
</feature>
<feature type="disulfide bond" evidence="1">
    <location>
        <begin position="2092"/>
        <end position="2101"/>
    </location>
</feature>
<feature type="disulfide bond" evidence="1">
    <location>
        <begin position="2104"/>
        <end position="2116"/>
    </location>
</feature>
<feature type="disulfide bond" evidence="1">
    <location>
        <begin position="2119"/>
        <end position="2126"/>
    </location>
</feature>
<feature type="disulfide bond" evidence="1">
    <location>
        <begin position="2121"/>
        <end position="2133"/>
    </location>
</feature>
<feature type="disulfide bond" evidence="1">
    <location>
        <begin position="2135"/>
        <end position="2144"/>
    </location>
</feature>
<feature type="disulfide bond" evidence="1">
    <location>
        <begin position="2147"/>
        <end position="2166"/>
    </location>
</feature>
<feature type="disulfide bond" description="Interchain" evidence="13">
    <location>
        <position position="2169"/>
    </location>
</feature>
<feature type="disulfide bond" description="Interchain" evidence="13">
    <location>
        <position position="2172"/>
    </location>
</feature>
<feature type="disulfide bond" evidence="1">
    <location>
        <begin position="2903"/>
        <end position="2933"/>
    </location>
</feature>
<feature type="disulfide bond" evidence="1">
    <location>
        <begin position="3094"/>
        <end position="3119"/>
    </location>
</feature>
<feature type="disulfide bond" evidence="1">
    <location>
        <begin position="3265"/>
        <end position="3296"/>
    </location>
</feature>
<feature type="disulfide bond" evidence="1">
    <location>
        <begin position="3488"/>
        <end position="3511"/>
    </location>
</feature>
<feature type="disulfide bond" evidence="1">
    <location>
        <begin position="3661"/>
        <end position="3689"/>
    </location>
</feature>
<feature type="sequence conflict" description="In Ref. 3; AAC53430." evidence="13" ref="3">
    <original>Y</original>
    <variation>N</variation>
    <location>
        <position position="662"/>
    </location>
</feature>
<feature type="sequence conflict" description="In Ref. 3; AAC53430." evidence="13" ref="3">
    <original>Y</original>
    <variation>H</variation>
    <location>
        <position position="1171"/>
    </location>
</feature>
<feature type="sequence conflict" description="In Ref. 3; AAC53430." evidence="13" ref="3">
    <original>S</original>
    <variation>R</variation>
    <location>
        <position position="2223"/>
    </location>
</feature>
<feature type="sequence conflict" description="In Ref. 3; AAC53430." evidence="13" ref="3">
    <original>L</original>
    <variation>V</variation>
    <location>
        <position position="2411"/>
    </location>
</feature>
<feature type="sequence conflict" description="In Ref. 3; AAC53430." evidence="13" ref="3">
    <original>T</original>
    <variation>P</variation>
    <location>
        <position position="2751"/>
    </location>
</feature>
<feature type="sequence conflict" description="In Ref. 3; AAC53430." evidence="13" ref="3">
    <original>R</original>
    <variation>Q</variation>
    <location>
        <position position="3497"/>
    </location>
</feature>
<feature type="sequence conflict" description="In Ref. 3; AAC53430." evidence="13" ref="3">
    <original>Q</original>
    <variation>H</variation>
    <location>
        <position position="3707"/>
    </location>
</feature>
<feature type="turn" evidence="14">
    <location>
        <begin position="57"/>
        <end position="60"/>
    </location>
</feature>
<feature type="strand" evidence="14">
    <location>
        <begin position="62"/>
        <end position="67"/>
    </location>
</feature>
<feature type="helix" evidence="14">
    <location>
        <begin position="122"/>
        <end position="124"/>
    </location>
</feature>
<feature type="strand" evidence="14">
    <location>
        <begin position="127"/>
        <end position="130"/>
    </location>
</feature>
<feature type="strand" evidence="14">
    <location>
        <begin position="148"/>
        <end position="166"/>
    </location>
</feature>
<feature type="strand" evidence="14">
    <location>
        <begin position="173"/>
        <end position="193"/>
    </location>
</feature>
<feature type="helix" evidence="14">
    <location>
        <begin position="197"/>
        <end position="203"/>
    </location>
</feature>
<feature type="turn" evidence="14">
    <location>
        <begin position="206"/>
        <end position="209"/>
    </location>
</feature>
<feature type="strand" evidence="14">
    <location>
        <begin position="227"/>
        <end position="229"/>
    </location>
</feature>
<feature type="strand" evidence="14">
    <location>
        <begin position="234"/>
        <end position="243"/>
    </location>
</feature>
<feature type="helix" evidence="14">
    <location>
        <begin position="244"/>
        <end position="246"/>
    </location>
</feature>
<feature type="helix" evidence="14">
    <location>
        <begin position="249"/>
        <end position="251"/>
    </location>
</feature>
<feature type="helix" evidence="14">
    <location>
        <begin position="253"/>
        <end position="259"/>
    </location>
</feature>
<feature type="strand" evidence="14">
    <location>
        <begin position="260"/>
        <end position="270"/>
    </location>
</feature>
<feature type="helix" evidence="14">
    <location>
        <begin position="278"/>
        <end position="283"/>
    </location>
</feature>
<feature type="turn" evidence="14">
    <location>
        <begin position="286"/>
        <end position="288"/>
    </location>
</feature>
<feature type="helix" evidence="14">
    <location>
        <begin position="289"/>
        <end position="291"/>
    </location>
</feature>
<feature type="strand" evidence="14">
    <location>
        <begin position="295"/>
        <end position="304"/>
    </location>
</feature>
<feature type="strand" evidence="14">
    <location>
        <begin position="314"/>
        <end position="317"/>
    </location>
</feature>
<feature type="strand" evidence="14">
    <location>
        <begin position="325"/>
        <end position="327"/>
    </location>
</feature>
<feature type="strand" evidence="14">
    <location>
        <begin position="333"/>
        <end position="337"/>
    </location>
</feature>
<feature type="strand" evidence="14">
    <location>
        <begin position="373"/>
        <end position="375"/>
    </location>
</feature>
<feature type="helix" evidence="14">
    <location>
        <begin position="377"/>
        <end position="381"/>
    </location>
</feature>
<feature type="strand" evidence="14">
    <location>
        <begin position="396"/>
        <end position="400"/>
    </location>
</feature>
<feature type="strand" evidence="14">
    <location>
        <begin position="403"/>
        <end position="407"/>
    </location>
</feature>
<feature type="strand" evidence="14">
    <location>
        <begin position="430"/>
        <end position="432"/>
    </location>
</feature>
<proteinExistence type="evidence at protein level"/>
<evidence type="ECO:0000250" key="1"/>
<evidence type="ECO:0000250" key="2">
    <source>
        <dbReference type="UniProtKB" id="O15230"/>
    </source>
</evidence>
<evidence type="ECO:0000255" key="3"/>
<evidence type="ECO:0000255" key="4">
    <source>
        <dbReference type="PROSITE-ProRule" id="PRU00122"/>
    </source>
</evidence>
<evidence type="ECO:0000255" key="5">
    <source>
        <dbReference type="PROSITE-ProRule" id="PRU00458"/>
    </source>
</evidence>
<evidence type="ECO:0000255" key="6">
    <source>
        <dbReference type="PROSITE-ProRule" id="PRU00460"/>
    </source>
</evidence>
<evidence type="ECO:0000255" key="7">
    <source>
        <dbReference type="PROSITE-ProRule" id="PRU00466"/>
    </source>
</evidence>
<evidence type="ECO:0000256" key="8">
    <source>
        <dbReference type="SAM" id="MobiDB-lite"/>
    </source>
</evidence>
<evidence type="ECO:0000269" key="9">
    <source>
    </source>
</evidence>
<evidence type="ECO:0000269" key="10">
    <source>
    </source>
</evidence>
<evidence type="ECO:0000269" key="11">
    <source>
    </source>
</evidence>
<evidence type="ECO:0000269" key="12">
    <source>
    </source>
</evidence>
<evidence type="ECO:0000305" key="13"/>
<evidence type="ECO:0007829" key="14">
    <source>
        <dbReference type="PDB" id="2Y38"/>
    </source>
</evidence>
<accession>Q61001</accession>
<accession>A2ABW7</accession>
<accession>Q9JHQ6</accession>
<dbReference type="EMBL" id="AL663027">
    <property type="status" value="NOT_ANNOTATED_CDS"/>
    <property type="molecule type" value="Genomic_DNA"/>
</dbReference>
<dbReference type="EMBL" id="AJ293593">
    <property type="protein sequence ID" value="CAB99255.1"/>
    <property type="molecule type" value="mRNA"/>
</dbReference>
<dbReference type="EMBL" id="U37501">
    <property type="protein sequence ID" value="AAC53430.1"/>
    <property type="molecule type" value="mRNA"/>
</dbReference>
<dbReference type="CCDS" id="CCDS38375.1"/>
<dbReference type="PIR" id="T10053">
    <property type="entry name" value="T10053"/>
</dbReference>
<dbReference type="RefSeq" id="NP_001074640.1">
    <property type="nucleotide sequence ID" value="NM_001081171.2"/>
</dbReference>
<dbReference type="PDB" id="2Y38">
    <property type="method" value="X-ray"/>
    <property type="resolution" value="2.90 A"/>
    <property type="chains" value="A=44-433"/>
</dbReference>
<dbReference type="PDBsum" id="2Y38"/>
<dbReference type="SMR" id="Q61001"/>
<dbReference type="BioGRID" id="201100">
    <property type="interactions" value="16"/>
</dbReference>
<dbReference type="ComplexPortal" id="CPX-3016">
    <property type="entry name" value="Laminin-511 complex"/>
</dbReference>
<dbReference type="ComplexPortal" id="CPX-3017">
    <property type="entry name" value="Laminin-521 complex"/>
</dbReference>
<dbReference type="ComplexPortal" id="CPX-3020">
    <property type="entry name" value="Laminin-522 complex"/>
</dbReference>
<dbReference type="ComplexPortal" id="CPX-3021">
    <property type="entry name" value="Laminin-523 complex"/>
</dbReference>
<dbReference type="FunCoup" id="Q61001">
    <property type="interactions" value="492"/>
</dbReference>
<dbReference type="IntAct" id="Q61001">
    <property type="interactions" value="3"/>
</dbReference>
<dbReference type="MINT" id="Q61001"/>
<dbReference type="STRING" id="10090.ENSMUSP00000015791"/>
<dbReference type="GlyConnect" id="2458">
    <property type="glycosylation" value="7 N-Linked glycans (8 sites)"/>
</dbReference>
<dbReference type="GlyCosmos" id="Q61001">
    <property type="glycosylation" value="26 sites, 15 glycans"/>
</dbReference>
<dbReference type="GlyGen" id="Q61001">
    <property type="glycosylation" value="31 sites, 23 N-linked glycans (19 sites), 1 O-linked glycan (2 sites)"/>
</dbReference>
<dbReference type="iPTMnet" id="Q61001"/>
<dbReference type="PhosphoSitePlus" id="Q61001"/>
<dbReference type="jPOST" id="Q61001"/>
<dbReference type="PaxDb" id="10090-ENSMUSP00000015791"/>
<dbReference type="PeptideAtlas" id="Q61001"/>
<dbReference type="ProteomicsDB" id="264910"/>
<dbReference type="Antibodypedia" id="14779">
    <property type="antibodies" value="281 antibodies from 32 providers"/>
</dbReference>
<dbReference type="Ensembl" id="ENSMUST00000015791.6">
    <property type="protein sequence ID" value="ENSMUSP00000015791.6"/>
    <property type="gene ID" value="ENSMUSG00000015647.10"/>
</dbReference>
<dbReference type="GeneID" id="16776"/>
<dbReference type="KEGG" id="mmu:16776"/>
<dbReference type="UCSC" id="uc008oip.1">
    <property type="organism name" value="mouse"/>
</dbReference>
<dbReference type="AGR" id="MGI:105382"/>
<dbReference type="CTD" id="3911"/>
<dbReference type="MGI" id="MGI:105382">
    <property type="gene designation" value="Lama5"/>
</dbReference>
<dbReference type="VEuPathDB" id="HostDB:ENSMUSG00000015647"/>
<dbReference type="eggNOG" id="KOG1836">
    <property type="taxonomic scope" value="Eukaryota"/>
</dbReference>
<dbReference type="GeneTree" id="ENSGT00940000156537"/>
<dbReference type="HOGENOM" id="CLU_000301_1_0_1"/>
<dbReference type="InParanoid" id="Q61001"/>
<dbReference type="OMA" id="ISHCAAH"/>
<dbReference type="OrthoDB" id="18487at2759"/>
<dbReference type="PhylomeDB" id="Q61001"/>
<dbReference type="TreeFam" id="TF335359"/>
<dbReference type="BioGRID-ORCS" id="16776">
    <property type="hits" value="3 hits in 78 CRISPR screens"/>
</dbReference>
<dbReference type="ChiTaRS" id="Lama5">
    <property type="organism name" value="mouse"/>
</dbReference>
<dbReference type="EvolutionaryTrace" id="Q61001"/>
<dbReference type="PRO" id="PR:Q61001"/>
<dbReference type="Proteomes" id="UP000000589">
    <property type="component" value="Chromosome 2"/>
</dbReference>
<dbReference type="RNAct" id="Q61001">
    <property type="molecule type" value="protein"/>
</dbReference>
<dbReference type="Bgee" id="ENSMUSG00000015647">
    <property type="expression patterns" value="Expressed in gastrula and 216 other cell types or tissues"/>
</dbReference>
<dbReference type="GO" id="GO:0005604">
    <property type="term" value="C:basement membrane"/>
    <property type="evidence" value="ECO:0000314"/>
    <property type="project" value="MGI"/>
</dbReference>
<dbReference type="GO" id="GO:0062023">
    <property type="term" value="C:collagen-containing extracellular matrix"/>
    <property type="evidence" value="ECO:0007005"/>
    <property type="project" value="BHF-UCL"/>
</dbReference>
<dbReference type="GO" id="GO:0031012">
    <property type="term" value="C:extracellular matrix"/>
    <property type="evidence" value="ECO:0000314"/>
    <property type="project" value="MGI"/>
</dbReference>
<dbReference type="GO" id="GO:0098965">
    <property type="term" value="C:extracellular matrix of synaptic cleft"/>
    <property type="evidence" value="ECO:0000314"/>
    <property type="project" value="SynGO"/>
</dbReference>
<dbReference type="GO" id="GO:0005576">
    <property type="term" value="C:extracellular region"/>
    <property type="evidence" value="ECO:0000304"/>
    <property type="project" value="Reactome"/>
</dbReference>
<dbReference type="GO" id="GO:0005615">
    <property type="term" value="C:extracellular space"/>
    <property type="evidence" value="ECO:0007669"/>
    <property type="project" value="Ensembl"/>
</dbReference>
<dbReference type="GO" id="GO:0098978">
    <property type="term" value="C:glutamatergic synapse"/>
    <property type="evidence" value="ECO:0000314"/>
    <property type="project" value="SynGO"/>
</dbReference>
<dbReference type="GO" id="GO:0043259">
    <property type="term" value="C:laminin-10 complex"/>
    <property type="evidence" value="ECO:0000353"/>
    <property type="project" value="MGI"/>
</dbReference>
<dbReference type="GO" id="GO:0005610">
    <property type="term" value="C:laminin-5 complex"/>
    <property type="evidence" value="ECO:0007669"/>
    <property type="project" value="Ensembl"/>
</dbReference>
<dbReference type="GO" id="GO:0031594">
    <property type="term" value="C:neuromuscular junction"/>
    <property type="evidence" value="ECO:0000314"/>
    <property type="project" value="SynGO"/>
</dbReference>
<dbReference type="GO" id="GO:0043083">
    <property type="term" value="C:synaptic cleft"/>
    <property type="evidence" value="ECO:0000314"/>
    <property type="project" value="SynGO"/>
</dbReference>
<dbReference type="GO" id="GO:0098631">
    <property type="term" value="F:cell adhesion mediator activity"/>
    <property type="evidence" value="ECO:0007669"/>
    <property type="project" value="Ensembl"/>
</dbReference>
<dbReference type="GO" id="GO:0005178">
    <property type="term" value="F:integrin binding"/>
    <property type="evidence" value="ECO:0000314"/>
    <property type="project" value="MGI"/>
</dbReference>
<dbReference type="GO" id="GO:0048018">
    <property type="term" value="F:receptor ligand activity"/>
    <property type="evidence" value="ECO:0007669"/>
    <property type="project" value="Ensembl"/>
</dbReference>
<dbReference type="GO" id="GO:0009887">
    <property type="term" value="P:animal organ morphogenesis"/>
    <property type="evidence" value="ECO:0000315"/>
    <property type="project" value="MGI"/>
</dbReference>
<dbReference type="GO" id="GO:0060445">
    <property type="term" value="P:branching involved in salivary gland morphogenesis"/>
    <property type="evidence" value="ECO:0000315"/>
    <property type="project" value="MGI"/>
</dbReference>
<dbReference type="GO" id="GO:0001658">
    <property type="term" value="P:branching involved in ureteric bud morphogenesis"/>
    <property type="evidence" value="ECO:0000315"/>
    <property type="project" value="MGI"/>
</dbReference>
<dbReference type="GO" id="GO:0048754">
    <property type="term" value="P:branching morphogenesis of an epithelial tube"/>
    <property type="evidence" value="ECO:0000315"/>
    <property type="project" value="MGI"/>
</dbReference>
<dbReference type="GO" id="GO:0060271">
    <property type="term" value="P:cilium assembly"/>
    <property type="evidence" value="ECO:0000315"/>
    <property type="project" value="MGI"/>
</dbReference>
<dbReference type="GO" id="GO:0001942">
    <property type="term" value="P:hair follicle development"/>
    <property type="evidence" value="ECO:0000315"/>
    <property type="project" value="MGI"/>
</dbReference>
<dbReference type="GO" id="GO:0007229">
    <property type="term" value="P:integrin-mediated signaling pathway"/>
    <property type="evidence" value="ECO:0007669"/>
    <property type="project" value="Ensembl"/>
</dbReference>
<dbReference type="GO" id="GO:0001822">
    <property type="term" value="P:kidney development"/>
    <property type="evidence" value="ECO:0000315"/>
    <property type="project" value="MGI"/>
</dbReference>
<dbReference type="GO" id="GO:0030324">
    <property type="term" value="P:lung development"/>
    <property type="evidence" value="ECO:0000315"/>
    <property type="project" value="MGI"/>
</dbReference>
<dbReference type="GO" id="GO:0001738">
    <property type="term" value="P:morphogenesis of a polarized epithelium"/>
    <property type="evidence" value="ECO:0000315"/>
    <property type="project" value="MGI"/>
</dbReference>
<dbReference type="GO" id="GO:0016331">
    <property type="term" value="P:morphogenesis of embryonic epithelium"/>
    <property type="evidence" value="ECO:0000315"/>
    <property type="project" value="MGI"/>
</dbReference>
<dbReference type="GO" id="GO:0007517">
    <property type="term" value="P:muscle organ development"/>
    <property type="evidence" value="ECO:0000315"/>
    <property type="project" value="MGI"/>
</dbReference>
<dbReference type="GO" id="GO:0001755">
    <property type="term" value="P:neural crest cell migration"/>
    <property type="evidence" value="ECO:0000315"/>
    <property type="project" value="MGI"/>
</dbReference>
<dbReference type="GO" id="GO:0042475">
    <property type="term" value="P:odontogenesis of dentin-containing tooth"/>
    <property type="evidence" value="ECO:0000315"/>
    <property type="project" value="MGI"/>
</dbReference>
<dbReference type="GO" id="GO:0099173">
    <property type="term" value="P:postsynapse organization"/>
    <property type="evidence" value="ECO:0000314"/>
    <property type="project" value="SynGO"/>
</dbReference>
<dbReference type="GO" id="GO:0072659">
    <property type="term" value="P:protein localization to plasma membrane"/>
    <property type="evidence" value="ECO:0000315"/>
    <property type="project" value="MGI"/>
</dbReference>
<dbReference type="GO" id="GO:0030155">
    <property type="term" value="P:regulation of cell adhesion"/>
    <property type="evidence" value="ECO:0007669"/>
    <property type="project" value="InterPro"/>
</dbReference>
<dbReference type="GO" id="GO:0030334">
    <property type="term" value="P:regulation of cell migration"/>
    <property type="evidence" value="ECO:0007669"/>
    <property type="project" value="InterPro"/>
</dbReference>
<dbReference type="GO" id="GO:0045995">
    <property type="term" value="P:regulation of embryonic development"/>
    <property type="evidence" value="ECO:0007669"/>
    <property type="project" value="InterPro"/>
</dbReference>
<dbReference type="GO" id="GO:0050678">
    <property type="term" value="P:regulation of epithelial cell proliferation"/>
    <property type="evidence" value="ECO:0000315"/>
    <property type="project" value="MGI"/>
</dbReference>
<dbReference type="GO" id="GO:0048705">
    <property type="term" value="P:skeletal system morphogenesis"/>
    <property type="evidence" value="ECO:0007669"/>
    <property type="project" value="Ensembl"/>
</dbReference>
<dbReference type="GO" id="GO:0034446">
    <property type="term" value="P:substrate adhesion-dependent cell spreading"/>
    <property type="evidence" value="ECO:0007669"/>
    <property type="project" value="Ensembl"/>
</dbReference>
<dbReference type="GO" id="GO:0036484">
    <property type="term" value="P:trunk neural crest cell migration"/>
    <property type="evidence" value="ECO:0000315"/>
    <property type="project" value="MGI"/>
</dbReference>
<dbReference type="CDD" id="cd00055">
    <property type="entry name" value="EGF_Lam"/>
    <property type="match status" value="19"/>
</dbReference>
<dbReference type="CDD" id="cd00110">
    <property type="entry name" value="LamG"/>
    <property type="match status" value="5"/>
</dbReference>
<dbReference type="FunFam" id="2.10.25.10:FF:000074">
    <property type="entry name" value="Laminin subunit alpha"/>
    <property type="match status" value="2"/>
</dbReference>
<dbReference type="FunFam" id="2.10.25.10:FF:000083">
    <property type="entry name" value="Laminin subunit alpha"/>
    <property type="match status" value="2"/>
</dbReference>
<dbReference type="FunFam" id="2.10.25.10:FF:000090">
    <property type="entry name" value="laminin subunit alpha"/>
    <property type="match status" value="1"/>
</dbReference>
<dbReference type="FunFam" id="2.10.25.10:FF:000069">
    <property type="entry name" value="Laminin subunit alpha 1"/>
    <property type="match status" value="1"/>
</dbReference>
<dbReference type="FunFam" id="2.10.25.10:FF:000454">
    <property type="entry name" value="Laminin subunit alpha 1"/>
    <property type="match status" value="1"/>
</dbReference>
<dbReference type="FunFam" id="2.10.25.10:FF:000033">
    <property type="entry name" value="Laminin subunit alpha 2"/>
    <property type="match status" value="1"/>
</dbReference>
<dbReference type="FunFam" id="2.10.25.10:FF:000034">
    <property type="entry name" value="Laminin subunit alpha 3"/>
    <property type="match status" value="1"/>
</dbReference>
<dbReference type="FunFam" id="2.10.25.10:FF:000084">
    <property type="entry name" value="Laminin subunit alpha 3"/>
    <property type="match status" value="1"/>
</dbReference>
<dbReference type="FunFam" id="2.10.25.10:FF:000051">
    <property type="entry name" value="Laminin subunit alpha 4"/>
    <property type="match status" value="1"/>
</dbReference>
<dbReference type="FunFam" id="2.10.25.10:FF:000209">
    <property type="entry name" value="Laminin subunit alpha 5"/>
    <property type="match status" value="1"/>
</dbReference>
<dbReference type="FunFam" id="2.10.25.10:FF:000405">
    <property type="entry name" value="Laminin subunit alpha 5"/>
    <property type="match status" value="1"/>
</dbReference>
<dbReference type="FunFam" id="2.10.25.10:FF:000430">
    <property type="entry name" value="Laminin subunit alpha 5"/>
    <property type="match status" value="1"/>
</dbReference>
<dbReference type="FunFam" id="2.10.25.10:FF:000437">
    <property type="entry name" value="Laminin subunit alpha 5"/>
    <property type="match status" value="1"/>
</dbReference>
<dbReference type="FunFam" id="2.10.25.10:FF:000467">
    <property type="entry name" value="Laminin subunit alpha 5"/>
    <property type="match status" value="1"/>
</dbReference>
<dbReference type="FunFam" id="2.60.120.200:FF:000150">
    <property type="entry name" value="Laminin subunit alpha 5"/>
    <property type="match status" value="1"/>
</dbReference>
<dbReference type="FunFam" id="2.60.120.200:FF:000151">
    <property type="entry name" value="Laminin subunit alpha 5"/>
    <property type="match status" value="1"/>
</dbReference>
<dbReference type="FunFam" id="2.60.120.200:FF:000175">
    <property type="entry name" value="Laminin subunit alpha 5"/>
    <property type="match status" value="1"/>
</dbReference>
<dbReference type="FunFam" id="2.60.120.200:FF:000202">
    <property type="entry name" value="Laminin subunit alpha 5"/>
    <property type="match status" value="1"/>
</dbReference>
<dbReference type="FunFam" id="2.60.120.200:FF:000209">
    <property type="entry name" value="Laminin subunit alpha 5"/>
    <property type="match status" value="1"/>
</dbReference>
<dbReference type="FunFam" id="2.60.120.260:FF:000022">
    <property type="entry name" value="Laminin subunit alpha 5"/>
    <property type="match status" value="1"/>
</dbReference>
<dbReference type="Gene3D" id="2.60.120.200">
    <property type="match status" value="5"/>
</dbReference>
<dbReference type="Gene3D" id="2.60.120.260">
    <property type="entry name" value="Galactose-binding domain-like"/>
    <property type="match status" value="1"/>
</dbReference>
<dbReference type="Gene3D" id="2.10.25.10">
    <property type="entry name" value="Laminin"/>
    <property type="match status" value="19"/>
</dbReference>
<dbReference type="InterPro" id="IPR013320">
    <property type="entry name" value="ConA-like_dom_sf"/>
</dbReference>
<dbReference type="InterPro" id="IPR000742">
    <property type="entry name" value="EGF-like_dom"/>
</dbReference>
<dbReference type="InterPro" id="IPR050440">
    <property type="entry name" value="Laminin/Netrin_ECM"/>
</dbReference>
<dbReference type="InterPro" id="IPR009254">
    <property type="entry name" value="Laminin_aI"/>
</dbReference>
<dbReference type="InterPro" id="IPR010307">
    <property type="entry name" value="Laminin_dom_II"/>
</dbReference>
<dbReference type="InterPro" id="IPR001791">
    <property type="entry name" value="Laminin_G"/>
</dbReference>
<dbReference type="InterPro" id="IPR000034">
    <property type="entry name" value="Laminin_IV"/>
</dbReference>
<dbReference type="InterPro" id="IPR008211">
    <property type="entry name" value="Laminin_N"/>
</dbReference>
<dbReference type="InterPro" id="IPR002049">
    <property type="entry name" value="LE_dom"/>
</dbReference>
<dbReference type="InterPro" id="IPR056863">
    <property type="entry name" value="LMN_ATRN_NET-like_EGF"/>
</dbReference>
<dbReference type="PANTHER" id="PTHR10574:SF261">
    <property type="entry name" value="LAMININ SUBUNIT ALPHA-5"/>
    <property type="match status" value="1"/>
</dbReference>
<dbReference type="PANTHER" id="PTHR10574">
    <property type="entry name" value="NETRIN/LAMININ-RELATED"/>
    <property type="match status" value="1"/>
</dbReference>
<dbReference type="Pfam" id="PF00053">
    <property type="entry name" value="EGF_laminin"/>
    <property type="match status" value="18"/>
</dbReference>
<dbReference type="Pfam" id="PF24973">
    <property type="entry name" value="EGF_LMN_ATRN"/>
    <property type="match status" value="1"/>
</dbReference>
<dbReference type="Pfam" id="PF00052">
    <property type="entry name" value="Laminin_B"/>
    <property type="match status" value="1"/>
</dbReference>
<dbReference type="Pfam" id="PF02210">
    <property type="entry name" value="Laminin_G_2"/>
    <property type="match status" value="5"/>
</dbReference>
<dbReference type="Pfam" id="PF06008">
    <property type="entry name" value="Laminin_I"/>
    <property type="match status" value="1"/>
</dbReference>
<dbReference type="Pfam" id="PF06009">
    <property type="entry name" value="Laminin_II"/>
    <property type="match status" value="1"/>
</dbReference>
<dbReference type="Pfam" id="PF00055">
    <property type="entry name" value="Laminin_N"/>
    <property type="match status" value="1"/>
</dbReference>
<dbReference type="PRINTS" id="PR00011">
    <property type="entry name" value="EGFLAMININ"/>
</dbReference>
<dbReference type="SMART" id="SM00181">
    <property type="entry name" value="EGF"/>
    <property type="match status" value="15"/>
</dbReference>
<dbReference type="SMART" id="SM00180">
    <property type="entry name" value="EGF_Lam"/>
    <property type="match status" value="22"/>
</dbReference>
<dbReference type="SMART" id="SM00281">
    <property type="entry name" value="LamB"/>
    <property type="match status" value="1"/>
</dbReference>
<dbReference type="SMART" id="SM00282">
    <property type="entry name" value="LamG"/>
    <property type="match status" value="5"/>
</dbReference>
<dbReference type="SMART" id="SM00136">
    <property type="entry name" value="LamNT"/>
    <property type="match status" value="1"/>
</dbReference>
<dbReference type="SUPFAM" id="SSF49899">
    <property type="entry name" value="Concanavalin A-like lectins/glucanases"/>
    <property type="match status" value="5"/>
</dbReference>
<dbReference type="SUPFAM" id="SSF57196">
    <property type="entry name" value="EGF/Laminin"/>
    <property type="match status" value="18"/>
</dbReference>
<dbReference type="PROSITE" id="PS00022">
    <property type="entry name" value="EGF_1"/>
    <property type="match status" value="19"/>
</dbReference>
<dbReference type="PROSITE" id="PS01186">
    <property type="entry name" value="EGF_2"/>
    <property type="match status" value="4"/>
</dbReference>
<dbReference type="PROSITE" id="PS01248">
    <property type="entry name" value="EGF_LAM_1"/>
    <property type="match status" value="19"/>
</dbReference>
<dbReference type="PROSITE" id="PS50027">
    <property type="entry name" value="EGF_LAM_2"/>
    <property type="match status" value="21"/>
</dbReference>
<dbReference type="PROSITE" id="PS50025">
    <property type="entry name" value="LAM_G_DOMAIN"/>
    <property type="match status" value="5"/>
</dbReference>
<dbReference type="PROSITE" id="PS51115">
    <property type="entry name" value="LAMININ_IVA"/>
    <property type="match status" value="1"/>
</dbReference>
<dbReference type="PROSITE" id="PS51117">
    <property type="entry name" value="LAMININ_NTER"/>
    <property type="match status" value="1"/>
</dbReference>